<sequence>MANIKSSEKDIRRTKRRNAANSQNRSRLRTQAKKILKAIKEKDPKAAMALFIEYTSFLDKAAKTNLIHSKNADRKKSRMAKRLNAVSAAA</sequence>
<comment type="function">
    <text evidence="1">Binds directly to 16S ribosomal RNA.</text>
</comment>
<comment type="similarity">
    <text evidence="1">Belongs to the bacterial ribosomal protein bS20 family.</text>
</comment>
<dbReference type="EMBL" id="CP000348">
    <property type="protein sequence ID" value="ABJ80057.1"/>
    <property type="molecule type" value="Genomic_DNA"/>
</dbReference>
<dbReference type="RefSeq" id="WP_002754071.1">
    <property type="nucleotide sequence ID" value="NC_008508.1"/>
</dbReference>
<dbReference type="SMR" id="Q04XY8"/>
<dbReference type="KEGG" id="lbl:LBL_2712"/>
<dbReference type="HOGENOM" id="CLU_160655_3_1_12"/>
<dbReference type="GO" id="GO:0005829">
    <property type="term" value="C:cytosol"/>
    <property type="evidence" value="ECO:0007669"/>
    <property type="project" value="TreeGrafter"/>
</dbReference>
<dbReference type="GO" id="GO:0015935">
    <property type="term" value="C:small ribosomal subunit"/>
    <property type="evidence" value="ECO:0007669"/>
    <property type="project" value="TreeGrafter"/>
</dbReference>
<dbReference type="GO" id="GO:0070181">
    <property type="term" value="F:small ribosomal subunit rRNA binding"/>
    <property type="evidence" value="ECO:0007669"/>
    <property type="project" value="TreeGrafter"/>
</dbReference>
<dbReference type="GO" id="GO:0003735">
    <property type="term" value="F:structural constituent of ribosome"/>
    <property type="evidence" value="ECO:0007669"/>
    <property type="project" value="InterPro"/>
</dbReference>
<dbReference type="GO" id="GO:0006412">
    <property type="term" value="P:translation"/>
    <property type="evidence" value="ECO:0007669"/>
    <property type="project" value="UniProtKB-UniRule"/>
</dbReference>
<dbReference type="FunFam" id="1.20.58.110:FF:000004">
    <property type="entry name" value="30S ribosomal protein S20"/>
    <property type="match status" value="1"/>
</dbReference>
<dbReference type="Gene3D" id="1.20.58.110">
    <property type="entry name" value="Ribosomal protein S20"/>
    <property type="match status" value="1"/>
</dbReference>
<dbReference type="HAMAP" id="MF_00500">
    <property type="entry name" value="Ribosomal_bS20"/>
    <property type="match status" value="1"/>
</dbReference>
<dbReference type="InterPro" id="IPR002583">
    <property type="entry name" value="Ribosomal_bS20"/>
</dbReference>
<dbReference type="InterPro" id="IPR036510">
    <property type="entry name" value="Ribosomal_bS20_sf"/>
</dbReference>
<dbReference type="NCBIfam" id="TIGR00029">
    <property type="entry name" value="S20"/>
    <property type="match status" value="1"/>
</dbReference>
<dbReference type="PANTHER" id="PTHR33398">
    <property type="entry name" value="30S RIBOSOMAL PROTEIN S20"/>
    <property type="match status" value="1"/>
</dbReference>
<dbReference type="PANTHER" id="PTHR33398:SF1">
    <property type="entry name" value="SMALL RIBOSOMAL SUBUNIT PROTEIN BS20C"/>
    <property type="match status" value="1"/>
</dbReference>
<dbReference type="Pfam" id="PF01649">
    <property type="entry name" value="Ribosomal_S20p"/>
    <property type="match status" value="1"/>
</dbReference>
<dbReference type="SUPFAM" id="SSF46992">
    <property type="entry name" value="Ribosomal protein S20"/>
    <property type="match status" value="1"/>
</dbReference>
<reference key="1">
    <citation type="journal article" date="2006" name="Proc. Natl. Acad. Sci. U.S.A.">
        <title>Genome reduction in Leptospira borgpetersenii reflects limited transmission potential.</title>
        <authorList>
            <person name="Bulach D.M."/>
            <person name="Zuerner R.L."/>
            <person name="Wilson P."/>
            <person name="Seemann T."/>
            <person name="McGrath A."/>
            <person name="Cullen P.A."/>
            <person name="Davis J."/>
            <person name="Johnson M."/>
            <person name="Kuczek E."/>
            <person name="Alt D.P."/>
            <person name="Peterson-Burch B."/>
            <person name="Coppel R.L."/>
            <person name="Rood J.I."/>
            <person name="Davies J.K."/>
            <person name="Adler B."/>
        </authorList>
    </citation>
    <scope>NUCLEOTIDE SEQUENCE [LARGE SCALE GENOMIC DNA]</scope>
    <source>
        <strain>L550</strain>
    </source>
</reference>
<feature type="chain" id="PRO_1000014598" description="Small ribosomal subunit protein bS20">
    <location>
        <begin position="1"/>
        <end position="90"/>
    </location>
</feature>
<feature type="region of interest" description="Disordered" evidence="2">
    <location>
        <begin position="1"/>
        <end position="29"/>
    </location>
</feature>
<feature type="region of interest" description="Disordered" evidence="2">
    <location>
        <begin position="69"/>
        <end position="90"/>
    </location>
</feature>
<feature type="compositionally biased region" description="Basic and acidic residues" evidence="2">
    <location>
        <begin position="1"/>
        <end position="11"/>
    </location>
</feature>
<name>RS20_LEPBL</name>
<proteinExistence type="inferred from homology"/>
<keyword id="KW-0687">Ribonucleoprotein</keyword>
<keyword id="KW-0689">Ribosomal protein</keyword>
<keyword id="KW-0694">RNA-binding</keyword>
<keyword id="KW-0699">rRNA-binding</keyword>
<gene>
    <name evidence="1" type="primary">rpsT</name>
    <name type="ordered locus">LBL_2712</name>
</gene>
<evidence type="ECO:0000255" key="1">
    <source>
        <dbReference type="HAMAP-Rule" id="MF_00500"/>
    </source>
</evidence>
<evidence type="ECO:0000256" key="2">
    <source>
        <dbReference type="SAM" id="MobiDB-lite"/>
    </source>
</evidence>
<evidence type="ECO:0000305" key="3"/>
<accession>Q04XY8</accession>
<protein>
    <recommendedName>
        <fullName evidence="1">Small ribosomal subunit protein bS20</fullName>
    </recommendedName>
    <alternativeName>
        <fullName evidence="3">30S ribosomal protein S20</fullName>
    </alternativeName>
</protein>
<organism>
    <name type="scientific">Leptospira borgpetersenii serovar Hardjo-bovis (strain L550)</name>
    <dbReference type="NCBI Taxonomy" id="355276"/>
    <lineage>
        <taxon>Bacteria</taxon>
        <taxon>Pseudomonadati</taxon>
        <taxon>Spirochaetota</taxon>
        <taxon>Spirochaetia</taxon>
        <taxon>Leptospirales</taxon>
        <taxon>Leptospiraceae</taxon>
        <taxon>Leptospira</taxon>
    </lineage>
</organism>